<sequence length="494" mass="56468">MTVRTRVAPSPTGDPHVGTAYIALFNRCFAQQHGGQFILRIEDTDQTRSTDQSEQMILDSLKWLGLTWDEGPDVGGPHGPYRQSERKGIYRQYAEQLIEKGHAFKCYRTSEELDALRAGLKESGENRALKPSDLELPADEQAKREADGAPYVIRMRVPTEGRCEIHDMLRGPVELDWALVDAQILLKSDGMPTYHLANIVDDHLMEITHVIRGEEWLNSAPKHKLLYEYFGWEMPVLCHMPLLRNPDKSKLSKRKNPTSILFYQRMGYLPEALVNYLGRMGWSMPDESEKFSLTQMQEAFDIQRVSLGGPVFDVEKLSWLNGQWLREQSDEQFLDSLLDWAFNRDYAMKIIPHLRQRVETLSEVADKAAFCFNGMPAISEASFEHKQYSADDIKVWLQYLLWTYEARNDWNREGLFADAKAIADALEVKIKDFLFPVFIAIAGTSASFSVVDSMEIIGSDISRARIRHAIEVLGGVSKKQMKKLEKAYRDLPVG</sequence>
<proteinExistence type="inferred from homology"/>
<keyword id="KW-0030">Aminoacyl-tRNA synthetase</keyword>
<keyword id="KW-0067">ATP-binding</keyword>
<keyword id="KW-0963">Cytoplasm</keyword>
<keyword id="KW-0436">Ligase</keyword>
<keyword id="KW-0547">Nucleotide-binding</keyword>
<keyword id="KW-0648">Protein biosynthesis</keyword>
<keyword id="KW-1185">Reference proteome</keyword>
<name>SYE_ALCBS</name>
<accession>Q0VPE1</accession>
<protein>
    <recommendedName>
        <fullName evidence="1">Glutamate--tRNA ligase</fullName>
        <ecNumber evidence="1">6.1.1.17</ecNumber>
    </recommendedName>
    <alternativeName>
        <fullName evidence="1">Glutamyl-tRNA synthetase</fullName>
        <shortName evidence="1">GluRS</shortName>
    </alternativeName>
</protein>
<comment type="function">
    <text evidence="1">Catalyzes the attachment of glutamate to tRNA(Glu) in a two-step reaction: glutamate is first activated by ATP to form Glu-AMP and then transferred to the acceptor end of tRNA(Glu).</text>
</comment>
<comment type="catalytic activity">
    <reaction evidence="1">
        <text>tRNA(Glu) + L-glutamate + ATP = L-glutamyl-tRNA(Glu) + AMP + diphosphate</text>
        <dbReference type="Rhea" id="RHEA:23540"/>
        <dbReference type="Rhea" id="RHEA-COMP:9663"/>
        <dbReference type="Rhea" id="RHEA-COMP:9680"/>
        <dbReference type="ChEBI" id="CHEBI:29985"/>
        <dbReference type="ChEBI" id="CHEBI:30616"/>
        <dbReference type="ChEBI" id="CHEBI:33019"/>
        <dbReference type="ChEBI" id="CHEBI:78442"/>
        <dbReference type="ChEBI" id="CHEBI:78520"/>
        <dbReference type="ChEBI" id="CHEBI:456215"/>
        <dbReference type="EC" id="6.1.1.17"/>
    </reaction>
</comment>
<comment type="subunit">
    <text evidence="1">Monomer.</text>
</comment>
<comment type="subcellular location">
    <subcellularLocation>
        <location evidence="1">Cytoplasm</location>
    </subcellularLocation>
</comment>
<comment type="similarity">
    <text evidence="1">Belongs to the class-I aminoacyl-tRNA synthetase family. Glutamate--tRNA ligase type 1 subfamily.</text>
</comment>
<evidence type="ECO:0000255" key="1">
    <source>
        <dbReference type="HAMAP-Rule" id="MF_00022"/>
    </source>
</evidence>
<reference key="1">
    <citation type="journal article" date="2006" name="Nat. Biotechnol.">
        <title>Genome sequence of the ubiquitous hydrocarbon-degrading marine bacterium Alcanivorax borkumensis.</title>
        <authorList>
            <person name="Schneiker S."/>
            <person name="Martins dos Santos V.A.P."/>
            <person name="Bartels D."/>
            <person name="Bekel T."/>
            <person name="Brecht M."/>
            <person name="Buhrmester J."/>
            <person name="Chernikova T.N."/>
            <person name="Denaro R."/>
            <person name="Ferrer M."/>
            <person name="Gertler C."/>
            <person name="Goesmann A."/>
            <person name="Golyshina O.V."/>
            <person name="Kaminski F."/>
            <person name="Khachane A.N."/>
            <person name="Lang S."/>
            <person name="Linke B."/>
            <person name="McHardy A.C."/>
            <person name="Meyer F."/>
            <person name="Nechitaylo T."/>
            <person name="Puehler A."/>
            <person name="Regenhardt D."/>
            <person name="Rupp O."/>
            <person name="Sabirova J.S."/>
            <person name="Selbitschka W."/>
            <person name="Yakimov M.M."/>
            <person name="Timmis K.N."/>
            <person name="Vorhoelter F.-J."/>
            <person name="Weidner S."/>
            <person name="Kaiser O."/>
            <person name="Golyshin P.N."/>
        </authorList>
    </citation>
    <scope>NUCLEOTIDE SEQUENCE [LARGE SCALE GENOMIC DNA]</scope>
    <source>
        <strain>ATCC 700651 / DSM 11573 / NCIMB 13689 / SK2</strain>
    </source>
</reference>
<organism>
    <name type="scientific">Alcanivorax borkumensis (strain ATCC 700651 / DSM 11573 / NCIMB 13689 / SK2)</name>
    <dbReference type="NCBI Taxonomy" id="393595"/>
    <lineage>
        <taxon>Bacteria</taxon>
        <taxon>Pseudomonadati</taxon>
        <taxon>Pseudomonadota</taxon>
        <taxon>Gammaproteobacteria</taxon>
        <taxon>Oceanospirillales</taxon>
        <taxon>Alcanivoracaceae</taxon>
        <taxon>Alcanivorax</taxon>
    </lineage>
</organism>
<feature type="chain" id="PRO_1000001869" description="Glutamate--tRNA ligase">
    <location>
        <begin position="1"/>
        <end position="494"/>
    </location>
</feature>
<feature type="short sequence motif" description="'HIGH' region" evidence="1">
    <location>
        <begin position="9"/>
        <end position="19"/>
    </location>
</feature>
<feature type="short sequence motif" description="'KMSKS' region" evidence="1">
    <location>
        <begin position="250"/>
        <end position="254"/>
    </location>
</feature>
<feature type="binding site" evidence="1">
    <location>
        <position position="253"/>
    </location>
    <ligand>
        <name>ATP</name>
        <dbReference type="ChEBI" id="CHEBI:30616"/>
    </ligand>
</feature>
<gene>
    <name evidence="1" type="primary">gltX</name>
    <name type="ordered locus">ABO_1509</name>
</gene>
<dbReference type="EC" id="6.1.1.17" evidence="1"/>
<dbReference type="EMBL" id="AM286690">
    <property type="protein sequence ID" value="CAL16957.1"/>
    <property type="molecule type" value="Genomic_DNA"/>
</dbReference>
<dbReference type="RefSeq" id="WP_011588790.1">
    <property type="nucleotide sequence ID" value="NC_008260.1"/>
</dbReference>
<dbReference type="SMR" id="Q0VPE1"/>
<dbReference type="STRING" id="393595.ABO_1509"/>
<dbReference type="KEGG" id="abo:ABO_1509"/>
<dbReference type="eggNOG" id="COG0008">
    <property type="taxonomic scope" value="Bacteria"/>
</dbReference>
<dbReference type="HOGENOM" id="CLU_015768_6_3_6"/>
<dbReference type="OrthoDB" id="9807503at2"/>
<dbReference type="Proteomes" id="UP000008871">
    <property type="component" value="Chromosome"/>
</dbReference>
<dbReference type="GO" id="GO:0005829">
    <property type="term" value="C:cytosol"/>
    <property type="evidence" value="ECO:0007669"/>
    <property type="project" value="TreeGrafter"/>
</dbReference>
<dbReference type="GO" id="GO:0005524">
    <property type="term" value="F:ATP binding"/>
    <property type="evidence" value="ECO:0007669"/>
    <property type="project" value="UniProtKB-UniRule"/>
</dbReference>
<dbReference type="GO" id="GO:0004818">
    <property type="term" value="F:glutamate-tRNA ligase activity"/>
    <property type="evidence" value="ECO:0007669"/>
    <property type="project" value="UniProtKB-UniRule"/>
</dbReference>
<dbReference type="GO" id="GO:0000049">
    <property type="term" value="F:tRNA binding"/>
    <property type="evidence" value="ECO:0007669"/>
    <property type="project" value="InterPro"/>
</dbReference>
<dbReference type="GO" id="GO:0008270">
    <property type="term" value="F:zinc ion binding"/>
    <property type="evidence" value="ECO:0007669"/>
    <property type="project" value="InterPro"/>
</dbReference>
<dbReference type="GO" id="GO:0006424">
    <property type="term" value="P:glutamyl-tRNA aminoacylation"/>
    <property type="evidence" value="ECO:0007669"/>
    <property type="project" value="UniProtKB-UniRule"/>
</dbReference>
<dbReference type="CDD" id="cd00808">
    <property type="entry name" value="GluRS_core"/>
    <property type="match status" value="1"/>
</dbReference>
<dbReference type="FunFam" id="3.40.50.620:FF:000045">
    <property type="entry name" value="Glutamate--tRNA ligase, mitochondrial"/>
    <property type="match status" value="1"/>
</dbReference>
<dbReference type="Gene3D" id="1.10.10.350">
    <property type="match status" value="1"/>
</dbReference>
<dbReference type="Gene3D" id="3.40.50.620">
    <property type="entry name" value="HUPs"/>
    <property type="match status" value="1"/>
</dbReference>
<dbReference type="HAMAP" id="MF_00022">
    <property type="entry name" value="Glu_tRNA_synth_type1"/>
    <property type="match status" value="1"/>
</dbReference>
<dbReference type="InterPro" id="IPR045462">
    <property type="entry name" value="aa-tRNA-synth_I_cd-bd"/>
</dbReference>
<dbReference type="InterPro" id="IPR020751">
    <property type="entry name" value="aa-tRNA-synth_I_codon-bd_sub2"/>
</dbReference>
<dbReference type="InterPro" id="IPR001412">
    <property type="entry name" value="aa-tRNA-synth_I_CS"/>
</dbReference>
<dbReference type="InterPro" id="IPR008925">
    <property type="entry name" value="aa_tRNA-synth_I_cd-bd_sf"/>
</dbReference>
<dbReference type="InterPro" id="IPR004527">
    <property type="entry name" value="Glu-tRNA-ligase_bac/mito"/>
</dbReference>
<dbReference type="InterPro" id="IPR000924">
    <property type="entry name" value="Glu/Gln-tRNA-synth"/>
</dbReference>
<dbReference type="InterPro" id="IPR020058">
    <property type="entry name" value="Glu/Gln-tRNA-synth_Ib_cat-dom"/>
</dbReference>
<dbReference type="InterPro" id="IPR049940">
    <property type="entry name" value="GluQ/Sye"/>
</dbReference>
<dbReference type="InterPro" id="IPR033910">
    <property type="entry name" value="GluRS_core"/>
</dbReference>
<dbReference type="InterPro" id="IPR014729">
    <property type="entry name" value="Rossmann-like_a/b/a_fold"/>
</dbReference>
<dbReference type="NCBIfam" id="TIGR00464">
    <property type="entry name" value="gltX_bact"/>
    <property type="match status" value="1"/>
</dbReference>
<dbReference type="PANTHER" id="PTHR43311">
    <property type="entry name" value="GLUTAMATE--TRNA LIGASE"/>
    <property type="match status" value="1"/>
</dbReference>
<dbReference type="PANTHER" id="PTHR43311:SF2">
    <property type="entry name" value="GLUTAMATE--TRNA LIGASE, MITOCHONDRIAL-RELATED"/>
    <property type="match status" value="1"/>
</dbReference>
<dbReference type="Pfam" id="PF19269">
    <property type="entry name" value="Anticodon_2"/>
    <property type="match status" value="1"/>
</dbReference>
<dbReference type="Pfam" id="PF00749">
    <property type="entry name" value="tRNA-synt_1c"/>
    <property type="match status" value="1"/>
</dbReference>
<dbReference type="PRINTS" id="PR00987">
    <property type="entry name" value="TRNASYNTHGLU"/>
</dbReference>
<dbReference type="SUPFAM" id="SSF48163">
    <property type="entry name" value="An anticodon-binding domain of class I aminoacyl-tRNA synthetases"/>
    <property type="match status" value="1"/>
</dbReference>
<dbReference type="SUPFAM" id="SSF52374">
    <property type="entry name" value="Nucleotidylyl transferase"/>
    <property type="match status" value="1"/>
</dbReference>
<dbReference type="PROSITE" id="PS00178">
    <property type="entry name" value="AA_TRNA_LIGASE_I"/>
    <property type="match status" value="1"/>
</dbReference>